<accession>A6TZ85</accession>
<evidence type="ECO:0000255" key="1">
    <source>
        <dbReference type="HAMAP-Rule" id="MF_00123"/>
    </source>
</evidence>
<feature type="chain" id="PRO_1000076233" description="Arginine--tRNA ligase">
    <location>
        <begin position="1"/>
        <end position="553"/>
    </location>
</feature>
<feature type="short sequence motif" description="'HIGH' region">
    <location>
        <begin position="130"/>
        <end position="140"/>
    </location>
</feature>
<organism>
    <name type="scientific">Staphylococcus aureus (strain JH1)</name>
    <dbReference type="NCBI Taxonomy" id="359787"/>
    <lineage>
        <taxon>Bacteria</taxon>
        <taxon>Bacillati</taxon>
        <taxon>Bacillota</taxon>
        <taxon>Bacilli</taxon>
        <taxon>Bacillales</taxon>
        <taxon>Staphylococcaceae</taxon>
        <taxon>Staphylococcus</taxon>
    </lineage>
</organism>
<protein>
    <recommendedName>
        <fullName evidence="1">Arginine--tRNA ligase</fullName>
        <ecNumber evidence="1">6.1.1.19</ecNumber>
    </recommendedName>
    <alternativeName>
        <fullName evidence="1">Arginyl-tRNA synthetase</fullName>
        <shortName evidence="1">ArgRS</shortName>
    </alternativeName>
</protein>
<comment type="catalytic activity">
    <reaction evidence="1">
        <text>tRNA(Arg) + L-arginine + ATP = L-arginyl-tRNA(Arg) + AMP + diphosphate</text>
        <dbReference type="Rhea" id="RHEA:20301"/>
        <dbReference type="Rhea" id="RHEA-COMP:9658"/>
        <dbReference type="Rhea" id="RHEA-COMP:9673"/>
        <dbReference type="ChEBI" id="CHEBI:30616"/>
        <dbReference type="ChEBI" id="CHEBI:32682"/>
        <dbReference type="ChEBI" id="CHEBI:33019"/>
        <dbReference type="ChEBI" id="CHEBI:78442"/>
        <dbReference type="ChEBI" id="CHEBI:78513"/>
        <dbReference type="ChEBI" id="CHEBI:456215"/>
        <dbReference type="EC" id="6.1.1.19"/>
    </reaction>
</comment>
<comment type="subunit">
    <text evidence="1">Monomer.</text>
</comment>
<comment type="subcellular location">
    <subcellularLocation>
        <location evidence="1">Cytoplasm</location>
    </subcellularLocation>
</comment>
<comment type="similarity">
    <text evidence="1">Belongs to the class-I aminoacyl-tRNA synthetase family.</text>
</comment>
<name>SYR_STAA2</name>
<gene>
    <name evidence="1" type="primary">argS</name>
    <name type="ordered locus">SaurJH1_0645</name>
</gene>
<proteinExistence type="inferred from homology"/>
<reference key="1">
    <citation type="submission" date="2007-06" db="EMBL/GenBank/DDBJ databases">
        <title>Complete sequence of chromosome of Staphylococcus aureus subsp. aureus JH1.</title>
        <authorList>
            <consortium name="US DOE Joint Genome Institute"/>
            <person name="Copeland A."/>
            <person name="Lucas S."/>
            <person name="Lapidus A."/>
            <person name="Barry K."/>
            <person name="Detter J.C."/>
            <person name="Glavina del Rio T."/>
            <person name="Hammon N."/>
            <person name="Israni S."/>
            <person name="Dalin E."/>
            <person name="Tice H."/>
            <person name="Pitluck S."/>
            <person name="Chain P."/>
            <person name="Malfatti S."/>
            <person name="Shin M."/>
            <person name="Vergez L."/>
            <person name="Schmutz J."/>
            <person name="Larimer F."/>
            <person name="Land M."/>
            <person name="Hauser L."/>
            <person name="Kyrpides N."/>
            <person name="Ivanova N."/>
            <person name="Tomasz A."/>
            <person name="Richardson P."/>
        </authorList>
    </citation>
    <scope>NUCLEOTIDE SEQUENCE [LARGE SCALE GENOMIC DNA]</scope>
    <source>
        <strain>JH1</strain>
    </source>
</reference>
<keyword id="KW-0030">Aminoacyl-tRNA synthetase</keyword>
<keyword id="KW-0067">ATP-binding</keyword>
<keyword id="KW-0963">Cytoplasm</keyword>
<keyword id="KW-0436">Ligase</keyword>
<keyword id="KW-0547">Nucleotide-binding</keyword>
<keyword id="KW-0648">Protein biosynthesis</keyword>
<dbReference type="EC" id="6.1.1.19" evidence="1"/>
<dbReference type="EMBL" id="CP000736">
    <property type="protein sequence ID" value="ABR51503.1"/>
    <property type="molecule type" value="Genomic_DNA"/>
</dbReference>
<dbReference type="SMR" id="A6TZ85"/>
<dbReference type="KEGG" id="sah:SaurJH1_0645"/>
<dbReference type="HOGENOM" id="CLU_006406_0_1_9"/>
<dbReference type="GO" id="GO:0005737">
    <property type="term" value="C:cytoplasm"/>
    <property type="evidence" value="ECO:0007669"/>
    <property type="project" value="UniProtKB-SubCell"/>
</dbReference>
<dbReference type="GO" id="GO:0004814">
    <property type="term" value="F:arginine-tRNA ligase activity"/>
    <property type="evidence" value="ECO:0007669"/>
    <property type="project" value="UniProtKB-UniRule"/>
</dbReference>
<dbReference type="GO" id="GO:0005524">
    <property type="term" value="F:ATP binding"/>
    <property type="evidence" value="ECO:0007669"/>
    <property type="project" value="UniProtKB-UniRule"/>
</dbReference>
<dbReference type="GO" id="GO:0006420">
    <property type="term" value="P:arginyl-tRNA aminoacylation"/>
    <property type="evidence" value="ECO:0007669"/>
    <property type="project" value="UniProtKB-UniRule"/>
</dbReference>
<dbReference type="CDD" id="cd00671">
    <property type="entry name" value="ArgRS_core"/>
    <property type="match status" value="1"/>
</dbReference>
<dbReference type="FunFam" id="1.10.730.10:FF:000008">
    <property type="entry name" value="Arginine--tRNA ligase"/>
    <property type="match status" value="1"/>
</dbReference>
<dbReference type="FunFam" id="3.30.1360.70:FF:000003">
    <property type="entry name" value="Arginine--tRNA ligase"/>
    <property type="match status" value="1"/>
</dbReference>
<dbReference type="FunFam" id="3.40.50.620:FF:000062">
    <property type="entry name" value="Arginine--tRNA ligase"/>
    <property type="match status" value="1"/>
</dbReference>
<dbReference type="Gene3D" id="3.30.1360.70">
    <property type="entry name" value="Arginyl tRNA synthetase N-terminal domain"/>
    <property type="match status" value="1"/>
</dbReference>
<dbReference type="Gene3D" id="3.40.50.620">
    <property type="entry name" value="HUPs"/>
    <property type="match status" value="1"/>
</dbReference>
<dbReference type="Gene3D" id="1.10.730.10">
    <property type="entry name" value="Isoleucyl-tRNA Synthetase, Domain 1"/>
    <property type="match status" value="1"/>
</dbReference>
<dbReference type="HAMAP" id="MF_00123">
    <property type="entry name" value="Arg_tRNA_synth"/>
    <property type="match status" value="1"/>
</dbReference>
<dbReference type="InterPro" id="IPR001412">
    <property type="entry name" value="aa-tRNA-synth_I_CS"/>
</dbReference>
<dbReference type="InterPro" id="IPR001278">
    <property type="entry name" value="Arg-tRNA-ligase"/>
</dbReference>
<dbReference type="InterPro" id="IPR005148">
    <property type="entry name" value="Arg-tRNA-synth_N"/>
</dbReference>
<dbReference type="InterPro" id="IPR036695">
    <property type="entry name" value="Arg-tRNA-synth_N_sf"/>
</dbReference>
<dbReference type="InterPro" id="IPR035684">
    <property type="entry name" value="ArgRS_core"/>
</dbReference>
<dbReference type="InterPro" id="IPR008909">
    <property type="entry name" value="DALR_anticod-bd"/>
</dbReference>
<dbReference type="InterPro" id="IPR014729">
    <property type="entry name" value="Rossmann-like_a/b/a_fold"/>
</dbReference>
<dbReference type="InterPro" id="IPR009080">
    <property type="entry name" value="tRNAsynth_Ia_anticodon-bd"/>
</dbReference>
<dbReference type="NCBIfam" id="TIGR00456">
    <property type="entry name" value="argS"/>
    <property type="match status" value="1"/>
</dbReference>
<dbReference type="PANTHER" id="PTHR11956:SF5">
    <property type="entry name" value="ARGININE--TRNA LIGASE, CYTOPLASMIC"/>
    <property type="match status" value="1"/>
</dbReference>
<dbReference type="PANTHER" id="PTHR11956">
    <property type="entry name" value="ARGINYL-TRNA SYNTHETASE"/>
    <property type="match status" value="1"/>
</dbReference>
<dbReference type="Pfam" id="PF03485">
    <property type="entry name" value="Arg_tRNA_synt_N"/>
    <property type="match status" value="1"/>
</dbReference>
<dbReference type="Pfam" id="PF05746">
    <property type="entry name" value="DALR_1"/>
    <property type="match status" value="1"/>
</dbReference>
<dbReference type="Pfam" id="PF00750">
    <property type="entry name" value="tRNA-synt_1d"/>
    <property type="match status" value="1"/>
</dbReference>
<dbReference type="PRINTS" id="PR01038">
    <property type="entry name" value="TRNASYNTHARG"/>
</dbReference>
<dbReference type="SMART" id="SM01016">
    <property type="entry name" value="Arg_tRNA_synt_N"/>
    <property type="match status" value="1"/>
</dbReference>
<dbReference type="SMART" id="SM00836">
    <property type="entry name" value="DALR_1"/>
    <property type="match status" value="1"/>
</dbReference>
<dbReference type="SUPFAM" id="SSF47323">
    <property type="entry name" value="Anticodon-binding domain of a subclass of class I aminoacyl-tRNA synthetases"/>
    <property type="match status" value="1"/>
</dbReference>
<dbReference type="SUPFAM" id="SSF55190">
    <property type="entry name" value="Arginyl-tRNA synthetase (ArgRS), N-terminal 'additional' domain"/>
    <property type="match status" value="1"/>
</dbReference>
<dbReference type="SUPFAM" id="SSF52374">
    <property type="entry name" value="Nucleotidylyl transferase"/>
    <property type="match status" value="1"/>
</dbReference>
<dbReference type="PROSITE" id="PS00178">
    <property type="entry name" value="AA_TRNA_LIGASE_I"/>
    <property type="match status" value="1"/>
</dbReference>
<sequence>MNIIDQVKQTLVEEIAASINKAGLADEIPDIKIEVPKDTKNGDYATNIAMVLTKIAKRNPREIAQAIVDNLDTEKAHVKQIDIAGPGFINFYLDNQYLTAIIPEAIEKGDQFGHVNESKGQNVLLEYVSANPTGDLHIGHARNAAVGDALANILTAAGYNVTREYYINDAGNQITNLARSIETRFFEALGDNSYSMPEDGYNGKDIIEIGKDLAEKHPEIKDYSEEARLKEFRKLGVEYEMAKLKNDLAEFNTHFDNWFSETSLYEKGEILEVLAKMKELGYTYEADGATWLRTTDFKDDKDRVLIKNDGTYTYFLPDIAYHFDKVKRGNDILIDLFGADHHGYINRLKASLETFGVDSNRLEIQIMQMVRLMENGKEVKMSKRTGNAITLREIMDEVGVDAARYFLTMRSPDSHFDFDMELAKEQSQDNPVYYAQYAHARICSILKQAKEQGIEVTAANDFTTITNEKAIELLKKVADFEPTIESAAEHRSAHRITNYIQDLAAHFHKFYNAEKVLTDDIEKTKAHVAMIEAVRITLKNALAMVGVSAPESM</sequence>